<feature type="chain" id="PRO_1000083825" description="NADPH-dependent 7-cyano-7-deazaguanine reductase">
    <location>
        <begin position="1"/>
        <end position="278"/>
    </location>
</feature>
<feature type="region of interest" description="Disordered" evidence="2">
    <location>
        <begin position="255"/>
        <end position="278"/>
    </location>
</feature>
<feature type="compositionally biased region" description="Polar residues" evidence="2">
    <location>
        <begin position="261"/>
        <end position="278"/>
    </location>
</feature>
<feature type="active site" description="Thioimide intermediate" evidence="1">
    <location>
        <position position="185"/>
    </location>
</feature>
<feature type="active site" description="Proton donor" evidence="1">
    <location>
        <position position="192"/>
    </location>
</feature>
<feature type="binding site" evidence="1">
    <location>
        <begin position="87"/>
        <end position="89"/>
    </location>
    <ligand>
        <name>substrate</name>
    </ligand>
</feature>
<feature type="binding site" evidence="1">
    <location>
        <begin position="89"/>
        <end position="90"/>
    </location>
    <ligand>
        <name>NADPH</name>
        <dbReference type="ChEBI" id="CHEBI:57783"/>
    </ligand>
</feature>
<feature type="binding site" evidence="1">
    <location>
        <begin position="224"/>
        <end position="225"/>
    </location>
    <ligand>
        <name>substrate</name>
    </ligand>
</feature>
<feature type="binding site" evidence="1">
    <location>
        <begin position="253"/>
        <end position="254"/>
    </location>
    <ligand>
        <name>NADPH</name>
        <dbReference type="ChEBI" id="CHEBI:57783"/>
    </ligand>
</feature>
<name>QUEF_COXBR</name>
<evidence type="ECO:0000255" key="1">
    <source>
        <dbReference type="HAMAP-Rule" id="MF_00817"/>
    </source>
</evidence>
<evidence type="ECO:0000256" key="2">
    <source>
        <dbReference type="SAM" id="MobiDB-lite"/>
    </source>
</evidence>
<dbReference type="EC" id="1.7.1.13" evidence="1"/>
<dbReference type="EMBL" id="CP000890">
    <property type="protein sequence ID" value="ABX78908.1"/>
    <property type="molecule type" value="Genomic_DNA"/>
</dbReference>
<dbReference type="RefSeq" id="WP_010957407.1">
    <property type="nucleotide sequence ID" value="NC_010117.1"/>
</dbReference>
<dbReference type="SMR" id="A9NAF9"/>
<dbReference type="KEGG" id="cbs:COXBURSA331_A0243"/>
<dbReference type="HOGENOM" id="CLU_054738_0_0_6"/>
<dbReference type="UniPathway" id="UPA00392"/>
<dbReference type="GO" id="GO:0005737">
    <property type="term" value="C:cytoplasm"/>
    <property type="evidence" value="ECO:0007669"/>
    <property type="project" value="UniProtKB-SubCell"/>
</dbReference>
<dbReference type="GO" id="GO:0033739">
    <property type="term" value="F:preQ1 synthase activity"/>
    <property type="evidence" value="ECO:0007669"/>
    <property type="project" value="UniProtKB-UniRule"/>
</dbReference>
<dbReference type="GO" id="GO:0008616">
    <property type="term" value="P:queuosine biosynthetic process"/>
    <property type="evidence" value="ECO:0007669"/>
    <property type="project" value="UniProtKB-UniRule"/>
</dbReference>
<dbReference type="GO" id="GO:0006400">
    <property type="term" value="P:tRNA modification"/>
    <property type="evidence" value="ECO:0007669"/>
    <property type="project" value="UniProtKB-UniRule"/>
</dbReference>
<dbReference type="Gene3D" id="3.30.1130.10">
    <property type="match status" value="2"/>
</dbReference>
<dbReference type="HAMAP" id="MF_00817">
    <property type="entry name" value="QueF_type2"/>
    <property type="match status" value="1"/>
</dbReference>
<dbReference type="InterPro" id="IPR043133">
    <property type="entry name" value="GTP-CH-I_C/QueF"/>
</dbReference>
<dbReference type="InterPro" id="IPR050084">
    <property type="entry name" value="NADPH_dep_7-cyano-7-deazaG_red"/>
</dbReference>
<dbReference type="InterPro" id="IPR029500">
    <property type="entry name" value="QueF"/>
</dbReference>
<dbReference type="InterPro" id="IPR029139">
    <property type="entry name" value="QueF_N"/>
</dbReference>
<dbReference type="InterPro" id="IPR016428">
    <property type="entry name" value="QueF_type2"/>
</dbReference>
<dbReference type="NCBIfam" id="TIGR03138">
    <property type="entry name" value="QueF"/>
    <property type="match status" value="1"/>
</dbReference>
<dbReference type="PANTHER" id="PTHR34354">
    <property type="entry name" value="NADPH-DEPENDENT 7-CYANO-7-DEAZAGUANINE REDUCTASE"/>
    <property type="match status" value="1"/>
</dbReference>
<dbReference type="PANTHER" id="PTHR34354:SF1">
    <property type="entry name" value="NADPH-DEPENDENT 7-CYANO-7-DEAZAGUANINE REDUCTASE"/>
    <property type="match status" value="1"/>
</dbReference>
<dbReference type="Pfam" id="PF14489">
    <property type="entry name" value="QueF"/>
    <property type="match status" value="1"/>
</dbReference>
<dbReference type="Pfam" id="PF14819">
    <property type="entry name" value="QueF_N"/>
    <property type="match status" value="1"/>
</dbReference>
<dbReference type="PIRSF" id="PIRSF004750">
    <property type="entry name" value="Nitrile_oxidored_YqcD_prd"/>
    <property type="match status" value="1"/>
</dbReference>
<dbReference type="SUPFAM" id="SSF55620">
    <property type="entry name" value="Tetrahydrobiopterin biosynthesis enzymes-like"/>
    <property type="match status" value="1"/>
</dbReference>
<accession>A9NAF9</accession>
<organism>
    <name type="scientific">Coxiella burnetii (strain RSA 331 / Henzerling II)</name>
    <dbReference type="NCBI Taxonomy" id="360115"/>
    <lineage>
        <taxon>Bacteria</taxon>
        <taxon>Pseudomonadati</taxon>
        <taxon>Pseudomonadota</taxon>
        <taxon>Gammaproteobacteria</taxon>
        <taxon>Legionellales</taxon>
        <taxon>Coxiellaceae</taxon>
        <taxon>Coxiella</taxon>
    </lineage>
</organism>
<protein>
    <recommendedName>
        <fullName evidence="1">NADPH-dependent 7-cyano-7-deazaguanine reductase</fullName>
        <ecNumber evidence="1">1.7.1.13</ecNumber>
    </recommendedName>
    <alternativeName>
        <fullName evidence="1">7-cyano-7-carbaguanine reductase</fullName>
    </alternativeName>
    <alternativeName>
        <fullName evidence="1">NADPH-dependent nitrile oxidoreductase</fullName>
    </alternativeName>
    <alternativeName>
        <fullName evidence="1">PreQ(0) reductase</fullName>
    </alternativeName>
</protein>
<proteinExistence type="inferred from homology"/>
<keyword id="KW-0963">Cytoplasm</keyword>
<keyword id="KW-0521">NADP</keyword>
<keyword id="KW-0560">Oxidoreductase</keyword>
<keyword id="KW-0671">Queuosine biosynthesis</keyword>
<gene>
    <name evidence="1" type="primary">queF</name>
    <name type="ordered locus">COXBURSA331_A0243</name>
</gene>
<sequence>MSTLRVLHEKSELGKTTVYPKEYAPHLLLPIPRDLNRKTLNVNVSEPPPFYGYDLWNAYELSWLNEKGKPFAARGEFIIPATSSHLIESKSFKLYLNSFNNERFADAAAVSQTMKRDLSKRVNESVTVNFILHETEIPVAYSPKGSLLDVLDIAIDTYSPDPNLLSTSQETVTETLYSHLLKSNCPVTGQPDWGSIEIHYTGPKIDHVQLLKYIISYRNHEEFHEACVERFFMDILRHCRPQELTVQARYTRRGGLDINPYRSTNPTFSVQNHRSFRQ</sequence>
<reference key="1">
    <citation type="submission" date="2007-11" db="EMBL/GenBank/DDBJ databases">
        <title>Genome sequencing of phylogenetically and phenotypically diverse Coxiella burnetii isolates.</title>
        <authorList>
            <person name="Seshadri R."/>
            <person name="Samuel J.E."/>
        </authorList>
    </citation>
    <scope>NUCLEOTIDE SEQUENCE [LARGE SCALE GENOMIC DNA]</scope>
    <source>
        <strain>RSA 331 / Henzerling II</strain>
    </source>
</reference>
<comment type="function">
    <text evidence="1">Catalyzes the NADPH-dependent reduction of 7-cyano-7-deazaguanine (preQ0) to 7-aminomethyl-7-deazaguanine (preQ1).</text>
</comment>
<comment type="catalytic activity">
    <reaction evidence="1">
        <text>7-aminomethyl-7-carbaguanine + 2 NADP(+) = 7-cyano-7-deazaguanine + 2 NADPH + 3 H(+)</text>
        <dbReference type="Rhea" id="RHEA:13409"/>
        <dbReference type="ChEBI" id="CHEBI:15378"/>
        <dbReference type="ChEBI" id="CHEBI:45075"/>
        <dbReference type="ChEBI" id="CHEBI:57783"/>
        <dbReference type="ChEBI" id="CHEBI:58349"/>
        <dbReference type="ChEBI" id="CHEBI:58703"/>
        <dbReference type="EC" id="1.7.1.13"/>
    </reaction>
</comment>
<comment type="pathway">
    <text evidence="1">tRNA modification; tRNA-queuosine biosynthesis.</text>
</comment>
<comment type="subunit">
    <text evidence="1">Homodimer.</text>
</comment>
<comment type="subcellular location">
    <subcellularLocation>
        <location evidence="1">Cytoplasm</location>
    </subcellularLocation>
</comment>
<comment type="similarity">
    <text evidence="1">Belongs to the GTP cyclohydrolase I family. QueF type 2 subfamily.</text>
</comment>